<comment type="function">
    <text evidence="1">Catalyzes the interconversion of 2-phosphoglycerate and 3-phosphoglycerate.</text>
</comment>
<comment type="catalytic activity">
    <reaction evidence="1">
        <text>(2R)-2-phosphoglycerate = (2R)-3-phosphoglycerate</text>
        <dbReference type="Rhea" id="RHEA:15901"/>
        <dbReference type="ChEBI" id="CHEBI:58272"/>
        <dbReference type="ChEBI" id="CHEBI:58289"/>
        <dbReference type="EC" id="5.4.2.11"/>
    </reaction>
</comment>
<comment type="pathway">
    <text evidence="1">Carbohydrate degradation; glycolysis; pyruvate from D-glyceraldehyde 3-phosphate: step 3/5.</text>
</comment>
<comment type="similarity">
    <text evidence="1">Belongs to the phosphoglycerate mutase family. BPG-dependent PGAM subfamily.</text>
</comment>
<protein>
    <recommendedName>
        <fullName evidence="1">2,3-bisphosphoglycerate-dependent phosphoglycerate mutase</fullName>
        <shortName evidence="1">BPG-dependent PGAM</shortName>
        <shortName evidence="1">PGAM</shortName>
        <shortName evidence="1">Phosphoglyceromutase</shortName>
        <shortName evidence="1">dPGM</shortName>
        <ecNumber evidence="1">5.4.2.11</ecNumber>
    </recommendedName>
</protein>
<keyword id="KW-0312">Gluconeogenesis</keyword>
<keyword id="KW-0324">Glycolysis</keyword>
<keyword id="KW-0413">Isomerase</keyword>
<gene>
    <name evidence="1" type="primary">gpmA</name>
    <name type="ordered locus">SAUSA300_2362</name>
</gene>
<proteinExistence type="inferred from homology"/>
<name>GPMA_STAA3</name>
<feature type="chain" id="PRO_1000064102" description="2,3-bisphosphoglycerate-dependent phosphoglycerate mutase">
    <location>
        <begin position="1"/>
        <end position="228"/>
    </location>
</feature>
<feature type="active site" description="Tele-phosphohistidine intermediate" evidence="1">
    <location>
        <position position="9"/>
    </location>
</feature>
<feature type="active site" description="Proton donor/acceptor" evidence="1">
    <location>
        <position position="87"/>
    </location>
</feature>
<feature type="binding site" evidence="1">
    <location>
        <begin position="8"/>
        <end position="15"/>
    </location>
    <ligand>
        <name>substrate</name>
    </ligand>
</feature>
<feature type="binding site" evidence="1">
    <location>
        <begin position="21"/>
        <end position="22"/>
    </location>
    <ligand>
        <name>substrate</name>
    </ligand>
</feature>
<feature type="binding site" evidence="1">
    <location>
        <position position="60"/>
    </location>
    <ligand>
        <name>substrate</name>
    </ligand>
</feature>
<feature type="binding site" evidence="1">
    <location>
        <begin position="87"/>
        <end position="90"/>
    </location>
    <ligand>
        <name>substrate</name>
    </ligand>
</feature>
<feature type="binding site" evidence="1">
    <location>
        <position position="98"/>
    </location>
    <ligand>
        <name>substrate</name>
    </ligand>
</feature>
<feature type="binding site" evidence="1">
    <location>
        <begin position="114"/>
        <end position="115"/>
    </location>
    <ligand>
        <name>substrate</name>
    </ligand>
</feature>
<feature type="binding site" evidence="1">
    <location>
        <begin position="183"/>
        <end position="184"/>
    </location>
    <ligand>
        <name>substrate</name>
    </ligand>
</feature>
<feature type="site" description="Transition state stabilizer" evidence="1">
    <location>
        <position position="182"/>
    </location>
</feature>
<accession>Q2FE81</accession>
<organism>
    <name type="scientific">Staphylococcus aureus (strain USA300)</name>
    <dbReference type="NCBI Taxonomy" id="367830"/>
    <lineage>
        <taxon>Bacteria</taxon>
        <taxon>Bacillati</taxon>
        <taxon>Bacillota</taxon>
        <taxon>Bacilli</taxon>
        <taxon>Bacillales</taxon>
        <taxon>Staphylococcaceae</taxon>
        <taxon>Staphylococcus</taxon>
    </lineage>
</organism>
<reference key="1">
    <citation type="journal article" date="2006" name="Lancet">
        <title>Complete genome sequence of USA300, an epidemic clone of community-acquired meticillin-resistant Staphylococcus aureus.</title>
        <authorList>
            <person name="Diep B.A."/>
            <person name="Gill S.R."/>
            <person name="Chang R.F."/>
            <person name="Phan T.H."/>
            <person name="Chen J.H."/>
            <person name="Davidson M.G."/>
            <person name="Lin F."/>
            <person name="Lin J."/>
            <person name="Carleton H.A."/>
            <person name="Mongodin E.F."/>
            <person name="Sensabaugh G.F."/>
            <person name="Perdreau-Remington F."/>
        </authorList>
    </citation>
    <scope>NUCLEOTIDE SEQUENCE [LARGE SCALE GENOMIC DNA]</scope>
    <source>
        <strain>USA300</strain>
    </source>
</reference>
<evidence type="ECO:0000255" key="1">
    <source>
        <dbReference type="HAMAP-Rule" id="MF_01039"/>
    </source>
</evidence>
<dbReference type="EC" id="5.4.2.11" evidence="1"/>
<dbReference type="EMBL" id="CP000255">
    <property type="protein sequence ID" value="ABD22852.1"/>
    <property type="molecule type" value="Genomic_DNA"/>
</dbReference>
<dbReference type="RefSeq" id="WP_001125208.1">
    <property type="nucleotide sequence ID" value="NZ_CP027476.1"/>
</dbReference>
<dbReference type="SMR" id="Q2FE81"/>
<dbReference type="KEGG" id="saa:SAUSA300_2362"/>
<dbReference type="HOGENOM" id="CLU_033323_1_5_9"/>
<dbReference type="OMA" id="MLPYWYD"/>
<dbReference type="UniPathway" id="UPA00109">
    <property type="reaction ID" value="UER00186"/>
</dbReference>
<dbReference type="Proteomes" id="UP000001939">
    <property type="component" value="Chromosome"/>
</dbReference>
<dbReference type="GO" id="GO:0004619">
    <property type="term" value="F:phosphoglycerate mutase activity"/>
    <property type="evidence" value="ECO:0007669"/>
    <property type="project" value="UniProtKB-EC"/>
</dbReference>
<dbReference type="GO" id="GO:0006094">
    <property type="term" value="P:gluconeogenesis"/>
    <property type="evidence" value="ECO:0007669"/>
    <property type="project" value="UniProtKB-UniRule"/>
</dbReference>
<dbReference type="GO" id="GO:0006096">
    <property type="term" value="P:glycolytic process"/>
    <property type="evidence" value="ECO:0007669"/>
    <property type="project" value="UniProtKB-UniRule"/>
</dbReference>
<dbReference type="CDD" id="cd07067">
    <property type="entry name" value="HP_PGM_like"/>
    <property type="match status" value="1"/>
</dbReference>
<dbReference type="FunFam" id="3.40.50.1240:FF:000003">
    <property type="entry name" value="2,3-bisphosphoglycerate-dependent phosphoglycerate mutase"/>
    <property type="match status" value="1"/>
</dbReference>
<dbReference type="Gene3D" id="3.40.50.1240">
    <property type="entry name" value="Phosphoglycerate mutase-like"/>
    <property type="match status" value="1"/>
</dbReference>
<dbReference type="HAMAP" id="MF_01039">
    <property type="entry name" value="PGAM_GpmA"/>
    <property type="match status" value="1"/>
</dbReference>
<dbReference type="InterPro" id="IPR013078">
    <property type="entry name" value="His_Pase_superF_clade-1"/>
</dbReference>
<dbReference type="InterPro" id="IPR029033">
    <property type="entry name" value="His_PPase_superfam"/>
</dbReference>
<dbReference type="InterPro" id="IPR001345">
    <property type="entry name" value="PG/BPGM_mutase_AS"/>
</dbReference>
<dbReference type="InterPro" id="IPR005952">
    <property type="entry name" value="Phosphogly_mut1"/>
</dbReference>
<dbReference type="NCBIfam" id="TIGR01258">
    <property type="entry name" value="pgm_1"/>
    <property type="match status" value="1"/>
</dbReference>
<dbReference type="NCBIfam" id="NF010713">
    <property type="entry name" value="PRK14115.1"/>
    <property type="match status" value="1"/>
</dbReference>
<dbReference type="NCBIfam" id="NF010717">
    <property type="entry name" value="PRK14119.1"/>
    <property type="match status" value="1"/>
</dbReference>
<dbReference type="PANTHER" id="PTHR11931">
    <property type="entry name" value="PHOSPHOGLYCERATE MUTASE"/>
    <property type="match status" value="1"/>
</dbReference>
<dbReference type="Pfam" id="PF00300">
    <property type="entry name" value="His_Phos_1"/>
    <property type="match status" value="1"/>
</dbReference>
<dbReference type="PIRSF" id="PIRSF000709">
    <property type="entry name" value="6PFK_2-Ptase"/>
    <property type="match status" value="1"/>
</dbReference>
<dbReference type="SMART" id="SM00855">
    <property type="entry name" value="PGAM"/>
    <property type="match status" value="1"/>
</dbReference>
<dbReference type="SUPFAM" id="SSF53254">
    <property type="entry name" value="Phosphoglycerate mutase-like"/>
    <property type="match status" value="1"/>
</dbReference>
<dbReference type="PROSITE" id="PS00175">
    <property type="entry name" value="PG_MUTASE"/>
    <property type="match status" value="1"/>
</dbReference>
<sequence length="228" mass="26680">MPKLILCRHGQSEWNAKNLFTGWEDVNLSEQGINEATRAGEKVRENNIAIDVAFTSLLTRALDTTHYILTESKQQWIPVYKSWRLNERHYGGLQGLNKDDARKEFGEEQVHIWRRSYDVKPPAETEEQREAYLADRRYNHLDKRMMPYSESLKDTLVRVIPFWTDHISQYLLDGQTVLVSAHGNSIRALIKYLEDVSDEDIINYEIKTGAPLVYELTDDLEVIDKYYL</sequence>